<evidence type="ECO:0000250" key="1">
    <source>
        <dbReference type="UniProtKB" id="Q99PD7"/>
    </source>
</evidence>
<evidence type="ECO:0000255" key="2"/>
<evidence type="ECO:0000256" key="3">
    <source>
        <dbReference type="SAM" id="MobiDB-lite"/>
    </source>
</evidence>
<evidence type="ECO:0000269" key="4">
    <source>
    </source>
</evidence>
<evidence type="ECO:0000269" key="5">
    <source>
    </source>
</evidence>
<evidence type="ECO:0000303" key="6">
    <source>
    </source>
</evidence>
<evidence type="ECO:0000305" key="7"/>
<evidence type="ECO:0000305" key="8">
    <source>
    </source>
</evidence>
<sequence length="644" mass="71992">MRPSGDEDRARRRRRRRRRRDLLLSQLCFLASVALLLWSLSSLREQKELDLMDLVGEDRKWMMARKLMQVNDTLTSEDAGLRNSKNCTEPALHEFPNDIFTNEDRRQGAVVLHVLCAIYMFYALAIVCDDFFVPSLEKICERLHLSEDVAGATFMAAGSSAPELFTSVIGVFITKGDVGVGTIVGSAVFNILCIIGVCGLFAGQVVALSSWCLLRDSIYYTLSVIALIVFIYDEKVSWWESLVLVLMYLIYIVIMKYNACIHQCFERRTKGAGNMVNGLANNAEIDDSSNCDATVVLLKKANFHRKASVIMVDELLSAYPHQLSFSEAGLRIMITSHFPPKTRLSMASRMLINERQRLINSRAYTNGESEVAIKIPIKHTVENGTGPSSAPDRGVNGTRRDDVVAEAGNETENENEDNENDEEEEEDEDDDEGPYTPFDTPSGKLETVKWAFTWPLSFVLYFTVPNCNKPRWEKWFMVTFASSTLWIAAFSYMMVWMVTIIGYTLGIPDVIMGITFLAAGTSVPDCMASLIVARQGMGDMAVSNSIGSNVFDILIGLGLPWALQTLAVDYGSYIRLNSRGLIYSVGLLLASVFVTVFGVHLNKWQLDKKLGCGCLLLYGVFLCFSIMTEFNVFTFVNLPMCGDH</sequence>
<accession>Q9HC58</accession>
<accession>B1AKV7</accession>
<accession>Q9BQJ9</accession>
<accession>Q9BQL7</accession>
<accession>Q9BQY3</accession>
<accession>Q9H519</accession>
<gene>
    <name type="primary">SLC24A3</name>
    <name evidence="6" type="synonym">NCKX3</name>
</gene>
<organism>
    <name type="scientific">Homo sapiens</name>
    <name type="common">Human</name>
    <dbReference type="NCBI Taxonomy" id="9606"/>
    <lineage>
        <taxon>Eukaryota</taxon>
        <taxon>Metazoa</taxon>
        <taxon>Chordata</taxon>
        <taxon>Craniata</taxon>
        <taxon>Vertebrata</taxon>
        <taxon>Euteleostomi</taxon>
        <taxon>Mammalia</taxon>
        <taxon>Eutheria</taxon>
        <taxon>Euarchontoglires</taxon>
        <taxon>Primates</taxon>
        <taxon>Haplorrhini</taxon>
        <taxon>Catarrhini</taxon>
        <taxon>Hominidae</taxon>
        <taxon>Homo</taxon>
    </lineage>
</organism>
<reference key="1">
    <citation type="journal article" date="2001" name="J. Biol. Chem.">
        <title>Molecular cloning of a third member of the potassium-dependent sodium-calcium exchanger gene family, NCKX3.</title>
        <authorList>
            <person name="Kraev A."/>
            <person name="Quednau B.D."/>
            <person name="Leach S."/>
            <person name="Li X.-F."/>
            <person name="Dong H."/>
            <person name="Winkfein R."/>
            <person name="Perizzolo M."/>
            <person name="Cai X."/>
            <person name="Yang R."/>
            <person name="Philipson K.D."/>
            <person name="Lytton J."/>
        </authorList>
    </citation>
    <scope>NUCLEOTIDE SEQUENCE [MRNA]</scope>
    <scope>FUNCTION</scope>
    <scope>TISSUE SPECIFICITY</scope>
    <scope>VARIANT ILE-55</scope>
    <source>
        <tissue>Brain</tissue>
        <tissue>Skeletal muscle</tissue>
    </source>
</reference>
<reference key="2">
    <citation type="journal article" date="2001" name="Nature">
        <title>The DNA sequence and comparative analysis of human chromosome 20.</title>
        <authorList>
            <person name="Deloukas P."/>
            <person name="Matthews L.H."/>
            <person name="Ashurst J.L."/>
            <person name="Burton J."/>
            <person name="Gilbert J.G.R."/>
            <person name="Jones M."/>
            <person name="Stavrides G."/>
            <person name="Almeida J.P."/>
            <person name="Babbage A.K."/>
            <person name="Bagguley C.L."/>
            <person name="Bailey J."/>
            <person name="Barlow K.F."/>
            <person name="Bates K.N."/>
            <person name="Beard L.M."/>
            <person name="Beare D.M."/>
            <person name="Beasley O.P."/>
            <person name="Bird C.P."/>
            <person name="Blakey S.E."/>
            <person name="Bridgeman A.M."/>
            <person name="Brown A.J."/>
            <person name="Buck D."/>
            <person name="Burrill W.D."/>
            <person name="Butler A.P."/>
            <person name="Carder C."/>
            <person name="Carter N.P."/>
            <person name="Chapman J.C."/>
            <person name="Clamp M."/>
            <person name="Clark G."/>
            <person name="Clark L.N."/>
            <person name="Clark S.Y."/>
            <person name="Clee C.M."/>
            <person name="Clegg S."/>
            <person name="Cobley V.E."/>
            <person name="Collier R.E."/>
            <person name="Connor R.E."/>
            <person name="Corby N.R."/>
            <person name="Coulson A."/>
            <person name="Coville G.J."/>
            <person name="Deadman R."/>
            <person name="Dhami P.D."/>
            <person name="Dunn M."/>
            <person name="Ellington A.G."/>
            <person name="Frankland J.A."/>
            <person name="Fraser A."/>
            <person name="French L."/>
            <person name="Garner P."/>
            <person name="Grafham D.V."/>
            <person name="Griffiths C."/>
            <person name="Griffiths M.N.D."/>
            <person name="Gwilliam R."/>
            <person name="Hall R.E."/>
            <person name="Hammond S."/>
            <person name="Harley J.L."/>
            <person name="Heath P.D."/>
            <person name="Ho S."/>
            <person name="Holden J.L."/>
            <person name="Howden P.J."/>
            <person name="Huckle E."/>
            <person name="Hunt A.R."/>
            <person name="Hunt S.E."/>
            <person name="Jekosch K."/>
            <person name="Johnson C.M."/>
            <person name="Johnson D."/>
            <person name="Kay M.P."/>
            <person name="Kimberley A.M."/>
            <person name="King A."/>
            <person name="Knights A."/>
            <person name="Laird G.K."/>
            <person name="Lawlor S."/>
            <person name="Lehvaeslaiho M.H."/>
            <person name="Leversha M.A."/>
            <person name="Lloyd C."/>
            <person name="Lloyd D.M."/>
            <person name="Lovell J.D."/>
            <person name="Marsh V.L."/>
            <person name="Martin S.L."/>
            <person name="McConnachie L.J."/>
            <person name="McLay K."/>
            <person name="McMurray A.A."/>
            <person name="Milne S.A."/>
            <person name="Mistry D."/>
            <person name="Moore M.J.F."/>
            <person name="Mullikin J.C."/>
            <person name="Nickerson T."/>
            <person name="Oliver K."/>
            <person name="Parker A."/>
            <person name="Patel R."/>
            <person name="Pearce T.A.V."/>
            <person name="Peck A.I."/>
            <person name="Phillimore B.J.C.T."/>
            <person name="Prathalingam S.R."/>
            <person name="Plumb R.W."/>
            <person name="Ramsay H."/>
            <person name="Rice C.M."/>
            <person name="Ross M.T."/>
            <person name="Scott C.E."/>
            <person name="Sehra H.K."/>
            <person name="Shownkeen R."/>
            <person name="Sims S."/>
            <person name="Skuce C.D."/>
            <person name="Smith M.L."/>
            <person name="Soderlund C."/>
            <person name="Steward C.A."/>
            <person name="Sulston J.E."/>
            <person name="Swann R.M."/>
            <person name="Sycamore N."/>
            <person name="Taylor R."/>
            <person name="Tee L."/>
            <person name="Thomas D.W."/>
            <person name="Thorpe A."/>
            <person name="Tracey A."/>
            <person name="Tromans A.C."/>
            <person name="Vaudin M."/>
            <person name="Wall M."/>
            <person name="Wallis J.M."/>
            <person name="Whitehead S.L."/>
            <person name="Whittaker P."/>
            <person name="Willey D.L."/>
            <person name="Williams L."/>
            <person name="Williams S.A."/>
            <person name="Wilming L."/>
            <person name="Wray P.W."/>
            <person name="Hubbard T."/>
            <person name="Durbin R.M."/>
            <person name="Bentley D.R."/>
            <person name="Beck S."/>
            <person name="Rogers J."/>
        </authorList>
    </citation>
    <scope>NUCLEOTIDE SEQUENCE [LARGE SCALE GENOMIC DNA]</scope>
</reference>
<reference key="3">
    <citation type="journal article" date="2016" name="Cell Calcium">
        <title>Cation dependencies and turnover rates of the human K(+)-dependent Na(+)-Ca(2+) exchangers NCKX1, NCKX2, NCKX3 and NCKX4.</title>
        <authorList>
            <person name="Jalloul A.H."/>
            <person name="Szerencsei R.T."/>
            <person name="Schnetkamp P.P."/>
        </authorList>
    </citation>
    <scope>FUNCTION</scope>
    <scope>TRANSPORTER ACTIVITY</scope>
    <scope>SUBCELLULAR LOCATION</scope>
</reference>
<proteinExistence type="evidence at protein level"/>
<feature type="signal peptide" evidence="2">
    <location>
        <begin position="1"/>
        <end position="44"/>
    </location>
</feature>
<feature type="chain" id="PRO_0000019370" description="Sodium/potassium/calcium exchanger 3">
    <location>
        <begin position="45"/>
        <end position="644"/>
    </location>
</feature>
<feature type="topological domain" description="Extracellular" evidence="2">
    <location>
        <begin position="45"/>
        <end position="107"/>
    </location>
</feature>
<feature type="transmembrane region" description="Helical" evidence="2">
    <location>
        <begin position="108"/>
        <end position="128"/>
    </location>
</feature>
<feature type="topological domain" description="Cytoplasmic" evidence="2">
    <location>
        <begin position="129"/>
        <end position="153"/>
    </location>
</feature>
<feature type="transmembrane region" description="Helical" evidence="2">
    <location>
        <begin position="154"/>
        <end position="174"/>
    </location>
</feature>
<feature type="topological domain" description="Extracellular" evidence="2">
    <location>
        <begin position="175"/>
        <end position="182"/>
    </location>
</feature>
<feature type="transmembrane region" description="Helical" evidence="2">
    <location>
        <begin position="183"/>
        <end position="203"/>
    </location>
</feature>
<feature type="topological domain" description="Cytoplasmic" evidence="2">
    <location>
        <begin position="204"/>
        <end position="210"/>
    </location>
</feature>
<feature type="transmembrane region" description="Helical" evidence="2">
    <location>
        <begin position="211"/>
        <end position="231"/>
    </location>
</feature>
<feature type="topological domain" description="Extracellular" evidence="2">
    <location>
        <begin position="232"/>
        <end position="234"/>
    </location>
</feature>
<feature type="transmembrane region" description="Helical" evidence="2">
    <location>
        <begin position="235"/>
        <end position="255"/>
    </location>
</feature>
<feature type="topological domain" description="Cytoplasmic" evidence="2">
    <location>
        <begin position="256"/>
        <end position="484"/>
    </location>
</feature>
<feature type="transmembrane region" description="Helical" evidence="2">
    <location>
        <begin position="485"/>
        <end position="505"/>
    </location>
</feature>
<feature type="topological domain" description="Extracellular" evidence="2">
    <location>
        <begin position="506"/>
        <end position="510"/>
    </location>
</feature>
<feature type="transmembrane region" description="Helical" evidence="2">
    <location>
        <begin position="511"/>
        <end position="531"/>
    </location>
</feature>
<feature type="topological domain" description="Cytoplasmic" evidence="2">
    <location>
        <begin position="532"/>
        <end position="549"/>
    </location>
</feature>
<feature type="transmembrane region" description="Helical" evidence="2">
    <location>
        <begin position="550"/>
        <end position="570"/>
    </location>
</feature>
<feature type="topological domain" description="Extracellular" evidence="2">
    <location>
        <begin position="571"/>
        <end position="580"/>
    </location>
</feature>
<feature type="transmembrane region" description="Helical" evidence="2">
    <location>
        <begin position="581"/>
        <end position="601"/>
    </location>
</feature>
<feature type="topological domain" description="Cytoplasmic" evidence="2">
    <location>
        <begin position="602"/>
        <end position="615"/>
    </location>
</feature>
<feature type="transmembrane region" description="Helical" evidence="2">
    <location>
        <begin position="616"/>
        <end position="636"/>
    </location>
</feature>
<feature type="topological domain" description="Extracellular" evidence="2">
    <location>
        <begin position="637"/>
        <end position="644"/>
    </location>
</feature>
<feature type="repeat" description="Alpha-1">
    <location>
        <begin position="149"/>
        <end position="189"/>
    </location>
</feature>
<feature type="repeat" description="Alpha-2">
    <location>
        <begin position="518"/>
        <end position="549"/>
    </location>
</feature>
<feature type="region of interest" description="Disordered" evidence="3">
    <location>
        <begin position="405"/>
        <end position="442"/>
    </location>
</feature>
<feature type="compositionally biased region" description="Acidic residues" evidence="3">
    <location>
        <begin position="409"/>
        <end position="433"/>
    </location>
</feature>
<feature type="modified residue" description="Phosphoserine" evidence="1">
    <location>
        <position position="308"/>
    </location>
</feature>
<feature type="glycosylation site" description="N-linked (GlcNAc...) asparagine" evidence="2">
    <location>
        <position position="71"/>
    </location>
</feature>
<feature type="glycosylation site" description="N-linked (GlcNAc...) asparagine" evidence="2">
    <location>
        <position position="86"/>
    </location>
</feature>
<feature type="sequence variant" id="VAR_028024" description="In dbSNP:rs3790174.">
    <original>L</original>
    <variation>P</variation>
    <location>
        <position position="49"/>
    </location>
</feature>
<feature type="sequence variant" id="VAR_028025" description="In dbSNP:rs1569767." evidence="4">
    <original>V</original>
    <variation>I</variation>
    <location>
        <position position="55"/>
    </location>
</feature>
<feature type="sequence variant" id="VAR_028026" description="In dbSNP:rs3790267.">
    <original>V</original>
    <variation>I</variation>
    <location>
        <position position="168"/>
    </location>
</feature>
<feature type="sequence variant" id="VAR_028027" description="In dbSNP:rs6136807.">
    <original>G</original>
    <variation>S</variation>
    <location>
        <position position="271"/>
    </location>
</feature>
<keyword id="KW-0050">Antiport</keyword>
<keyword id="KW-0106">Calcium</keyword>
<keyword id="KW-0109">Calcium transport</keyword>
<keyword id="KW-1003">Cell membrane</keyword>
<keyword id="KW-0325">Glycoprotein</keyword>
<keyword id="KW-0406">Ion transport</keyword>
<keyword id="KW-0472">Membrane</keyword>
<keyword id="KW-0597">Phosphoprotein</keyword>
<keyword id="KW-0630">Potassium</keyword>
<keyword id="KW-0633">Potassium transport</keyword>
<keyword id="KW-1267">Proteomics identification</keyword>
<keyword id="KW-1185">Reference proteome</keyword>
<keyword id="KW-0677">Repeat</keyword>
<keyword id="KW-0732">Signal</keyword>
<keyword id="KW-0915">Sodium</keyword>
<keyword id="KW-0739">Sodium transport</keyword>
<keyword id="KW-0769">Symport</keyword>
<keyword id="KW-0812">Transmembrane</keyword>
<keyword id="KW-1133">Transmembrane helix</keyword>
<keyword id="KW-0813">Transport</keyword>
<dbReference type="EMBL" id="AF288087">
    <property type="status" value="NOT_ANNOTATED_CDS"/>
    <property type="molecule type" value="mRNA"/>
</dbReference>
<dbReference type="EMBL" id="AF169257">
    <property type="protein sequence ID" value="AAG12988.2"/>
    <property type="molecule type" value="mRNA"/>
</dbReference>
<dbReference type="EMBL" id="AL121830">
    <property type="status" value="NOT_ANNOTATED_CDS"/>
    <property type="molecule type" value="Genomic_DNA"/>
</dbReference>
<dbReference type="EMBL" id="AL049647">
    <property type="status" value="NOT_ANNOTATED_CDS"/>
    <property type="molecule type" value="Genomic_DNA"/>
</dbReference>
<dbReference type="EMBL" id="AL034425">
    <property type="status" value="NOT_ANNOTATED_CDS"/>
    <property type="molecule type" value="Genomic_DNA"/>
</dbReference>
<dbReference type="EMBL" id="AL121761">
    <property type="status" value="NOT_ANNOTATED_CDS"/>
    <property type="molecule type" value="Genomic_DNA"/>
</dbReference>
<dbReference type="EMBL" id="AL139429">
    <property type="status" value="NOT_ANNOTATED_CDS"/>
    <property type="molecule type" value="Genomic_DNA"/>
</dbReference>
<dbReference type="EMBL" id="AL136090">
    <property type="status" value="NOT_ANNOTATED_CDS"/>
    <property type="molecule type" value="Genomic_DNA"/>
</dbReference>
<dbReference type="CCDS" id="CCDS13140.1"/>
<dbReference type="RefSeq" id="NP_065740.2">
    <property type="nucleotide sequence ID" value="NM_020689.3"/>
</dbReference>
<dbReference type="BioGRID" id="121518">
    <property type="interactions" value="22"/>
</dbReference>
<dbReference type="FunCoup" id="Q9HC58">
    <property type="interactions" value="305"/>
</dbReference>
<dbReference type="IntAct" id="Q9HC58">
    <property type="interactions" value="18"/>
</dbReference>
<dbReference type="STRING" id="9606.ENSP00000333519"/>
<dbReference type="TCDB" id="2.A.19.4.10">
    <property type="family name" value="the ca(2+):cation antiporter (caca) family"/>
</dbReference>
<dbReference type="GlyCosmos" id="Q9HC58">
    <property type="glycosylation" value="2 sites, No reported glycans"/>
</dbReference>
<dbReference type="GlyGen" id="Q9HC58">
    <property type="glycosylation" value="4 sites, 1 O-linked glycan (2 sites)"/>
</dbReference>
<dbReference type="iPTMnet" id="Q9HC58"/>
<dbReference type="PhosphoSitePlus" id="Q9HC58"/>
<dbReference type="BioMuta" id="SLC24A3"/>
<dbReference type="DMDM" id="116242671"/>
<dbReference type="MassIVE" id="Q9HC58"/>
<dbReference type="PaxDb" id="9606-ENSP00000333519"/>
<dbReference type="PeptideAtlas" id="Q9HC58"/>
<dbReference type="ProteomicsDB" id="81642"/>
<dbReference type="Antibodypedia" id="65262">
    <property type="antibodies" value="114 antibodies from 20 providers"/>
</dbReference>
<dbReference type="DNASU" id="57419"/>
<dbReference type="Ensembl" id="ENST00000328041.11">
    <property type="protein sequence ID" value="ENSP00000333519.5"/>
    <property type="gene ID" value="ENSG00000185052.13"/>
</dbReference>
<dbReference type="GeneID" id="57419"/>
<dbReference type="KEGG" id="hsa:57419"/>
<dbReference type="MANE-Select" id="ENST00000328041.11">
    <property type="protein sequence ID" value="ENSP00000333519.5"/>
    <property type="RefSeq nucleotide sequence ID" value="NM_020689.4"/>
    <property type="RefSeq protein sequence ID" value="NP_065740.2"/>
</dbReference>
<dbReference type="UCSC" id="uc002wrl.4">
    <property type="organism name" value="human"/>
</dbReference>
<dbReference type="AGR" id="HGNC:10977"/>
<dbReference type="CTD" id="57419"/>
<dbReference type="DisGeNET" id="57419"/>
<dbReference type="GeneCards" id="SLC24A3"/>
<dbReference type="HGNC" id="HGNC:10977">
    <property type="gene designation" value="SLC24A3"/>
</dbReference>
<dbReference type="HPA" id="ENSG00000185052">
    <property type="expression patterns" value="Low tissue specificity"/>
</dbReference>
<dbReference type="MIM" id="609839">
    <property type="type" value="gene"/>
</dbReference>
<dbReference type="neXtProt" id="NX_Q9HC58"/>
<dbReference type="OpenTargets" id="ENSG00000185052"/>
<dbReference type="PharmGKB" id="PA35853"/>
<dbReference type="VEuPathDB" id="HostDB:ENSG00000185052"/>
<dbReference type="eggNOG" id="KOG1307">
    <property type="taxonomic scope" value="Eukaryota"/>
</dbReference>
<dbReference type="GeneTree" id="ENSGT01030000234532"/>
<dbReference type="HOGENOM" id="CLU_007948_5_2_1"/>
<dbReference type="InParanoid" id="Q9HC58"/>
<dbReference type="OMA" id="DSVIMVC"/>
<dbReference type="OrthoDB" id="2127281at2759"/>
<dbReference type="PAN-GO" id="Q9HC58">
    <property type="GO annotations" value="5 GO annotations based on evolutionary models"/>
</dbReference>
<dbReference type="PhylomeDB" id="Q9HC58"/>
<dbReference type="TreeFam" id="TF318759"/>
<dbReference type="PathwayCommons" id="Q9HC58"/>
<dbReference type="Reactome" id="R-HSA-425561">
    <property type="pathway name" value="Sodium/Calcium exchangers"/>
</dbReference>
<dbReference type="SIGNOR" id="Q9HC58"/>
<dbReference type="BioGRID-ORCS" id="57419">
    <property type="hits" value="8 hits in 1148 CRISPR screens"/>
</dbReference>
<dbReference type="ChiTaRS" id="SLC24A3">
    <property type="organism name" value="human"/>
</dbReference>
<dbReference type="GenomeRNAi" id="57419"/>
<dbReference type="Pharos" id="Q9HC58">
    <property type="development level" value="Tbio"/>
</dbReference>
<dbReference type="PRO" id="PR:Q9HC58"/>
<dbReference type="Proteomes" id="UP000005640">
    <property type="component" value="Chromosome 20"/>
</dbReference>
<dbReference type="RNAct" id="Q9HC58">
    <property type="molecule type" value="protein"/>
</dbReference>
<dbReference type="Bgee" id="ENSG00000185052">
    <property type="expression patterns" value="Expressed in lateral nuclear group of thalamus and 197 other cell types or tissues"/>
</dbReference>
<dbReference type="GO" id="GO:0071944">
    <property type="term" value="C:cell periphery"/>
    <property type="evidence" value="ECO:0000314"/>
    <property type="project" value="ARUK-UCL"/>
</dbReference>
<dbReference type="GO" id="GO:0005886">
    <property type="term" value="C:plasma membrane"/>
    <property type="evidence" value="ECO:0000314"/>
    <property type="project" value="ARUK-UCL"/>
</dbReference>
<dbReference type="GO" id="GO:0005262">
    <property type="term" value="F:calcium channel activity"/>
    <property type="evidence" value="ECO:0000318"/>
    <property type="project" value="GO_Central"/>
</dbReference>
<dbReference type="GO" id="GO:0008273">
    <property type="term" value="F:calcium, potassium:sodium antiporter activity"/>
    <property type="evidence" value="ECO:0000314"/>
    <property type="project" value="ARUK-UCL"/>
</dbReference>
<dbReference type="GO" id="GO:0015293">
    <property type="term" value="F:symporter activity"/>
    <property type="evidence" value="ECO:0007669"/>
    <property type="project" value="UniProtKB-KW"/>
</dbReference>
<dbReference type="GO" id="GO:0030282">
    <property type="term" value="P:bone mineralization"/>
    <property type="evidence" value="ECO:0000250"/>
    <property type="project" value="ARUK-UCL"/>
</dbReference>
<dbReference type="GO" id="GO:0070588">
    <property type="term" value="P:calcium ion transmembrane transport"/>
    <property type="evidence" value="ECO:0000314"/>
    <property type="project" value="ARUK-UCL"/>
</dbReference>
<dbReference type="GO" id="GO:0006874">
    <property type="term" value="P:intracellular calcium ion homeostasis"/>
    <property type="evidence" value="ECO:0000314"/>
    <property type="project" value="ARUK-UCL"/>
</dbReference>
<dbReference type="GO" id="GO:0006811">
    <property type="term" value="P:monoatomic ion transport"/>
    <property type="evidence" value="ECO:0000304"/>
    <property type="project" value="Reactome"/>
</dbReference>
<dbReference type="GO" id="GO:0010629">
    <property type="term" value="P:negative regulation of gene expression"/>
    <property type="evidence" value="ECO:0000250"/>
    <property type="project" value="ARUK-UCL"/>
</dbReference>
<dbReference type="GO" id="GO:0010628">
    <property type="term" value="P:positive regulation of gene expression"/>
    <property type="evidence" value="ECO:0000250"/>
    <property type="project" value="ARUK-UCL"/>
</dbReference>
<dbReference type="GO" id="GO:0071805">
    <property type="term" value="P:potassium ion transmembrane transport"/>
    <property type="evidence" value="ECO:0000314"/>
    <property type="project" value="ARUK-UCL"/>
</dbReference>
<dbReference type="GO" id="GO:0035725">
    <property type="term" value="P:sodium ion transmembrane transport"/>
    <property type="evidence" value="ECO:0000314"/>
    <property type="project" value="ARUK-UCL"/>
</dbReference>
<dbReference type="GO" id="GO:0150104">
    <property type="term" value="P:transport across blood-brain barrier"/>
    <property type="evidence" value="ECO:0000303"/>
    <property type="project" value="ARUK-UCL"/>
</dbReference>
<dbReference type="FunFam" id="1.20.1420.30:FF:000005">
    <property type="entry name" value="sodium/potassium/calcium exchanger 3 isoform X1"/>
    <property type="match status" value="1"/>
</dbReference>
<dbReference type="FunFam" id="1.20.1420.30:FF:000006">
    <property type="entry name" value="sodium/potassium/calcium exchanger 4 isoform X1"/>
    <property type="match status" value="1"/>
</dbReference>
<dbReference type="Gene3D" id="1.20.1420.30">
    <property type="entry name" value="NCX, central ion-binding region"/>
    <property type="match status" value="2"/>
</dbReference>
<dbReference type="InterPro" id="IPR004481">
    <property type="entry name" value="K/Na/Ca-exchanger"/>
</dbReference>
<dbReference type="InterPro" id="IPR004837">
    <property type="entry name" value="NaCa_Exmemb"/>
</dbReference>
<dbReference type="InterPro" id="IPR044880">
    <property type="entry name" value="NCX_ion-bd_dom_sf"/>
</dbReference>
<dbReference type="NCBIfam" id="TIGR00367">
    <property type="entry name" value="calcium/sodium antiporter"/>
    <property type="match status" value="1"/>
</dbReference>
<dbReference type="PANTHER" id="PTHR10846">
    <property type="entry name" value="SODIUM/POTASSIUM/CALCIUM EXCHANGER"/>
    <property type="match status" value="1"/>
</dbReference>
<dbReference type="PANTHER" id="PTHR10846:SF42">
    <property type="entry name" value="SODIUM_POTASSIUM_CALCIUM EXCHANGER 3"/>
    <property type="match status" value="1"/>
</dbReference>
<dbReference type="Pfam" id="PF01699">
    <property type="entry name" value="Na_Ca_ex"/>
    <property type="match status" value="2"/>
</dbReference>
<name>NCKX3_HUMAN</name>
<comment type="function">
    <text evidence="4 5">Calcium, potassium:sodium antiporter that transports 1 Ca(2+) and 1 K(+) in exchange for 4 Na(+).</text>
</comment>
<comment type="catalytic activity">
    <reaction evidence="8">
        <text>Ca(2+)(out) + K(+)(out) + 4 Na(+)(in) = Ca(2+)(in) + K(+)(in) + 4 Na(+)(out)</text>
        <dbReference type="Rhea" id="RHEA:69967"/>
        <dbReference type="ChEBI" id="CHEBI:29101"/>
        <dbReference type="ChEBI" id="CHEBI:29103"/>
        <dbReference type="ChEBI" id="CHEBI:29108"/>
    </reaction>
</comment>
<comment type="subcellular location">
    <subcellularLocation>
        <location evidence="5">Cell membrane</location>
        <topology evidence="2">Multi-pass membrane protein</topology>
    </subcellularLocation>
</comment>
<comment type="tissue specificity">
    <text evidence="4">Abundant in the brain (PubMed:11294880). Expressed at low levels in the aorta, uterus and intestine (PubMed:11294880).</text>
</comment>
<comment type="similarity">
    <text evidence="7">Belongs to the Ca(2+):cation antiporter (CaCA) (TC 2.A.19) family. SLC24A subfamily.</text>
</comment>
<protein>
    <recommendedName>
        <fullName>Sodium/potassium/calcium exchanger 3</fullName>
    </recommendedName>
    <alternativeName>
        <fullName evidence="6">Na(+)/K(+)/Ca(2+)-exchange protein 3</fullName>
    </alternativeName>
    <alternativeName>
        <fullName>Solute carrier family 24 member 3</fullName>
    </alternativeName>
</protein>